<organism>
    <name type="scientific">Acetivibrio thermocellus</name>
    <name type="common">Hungateiclostridium thermocellum</name>
    <name type="synonym">Clostridium thermocellum</name>
    <dbReference type="NCBI Taxonomy" id="1515"/>
    <lineage>
        <taxon>Bacteria</taxon>
        <taxon>Bacillati</taxon>
        <taxon>Bacillota</taxon>
        <taxon>Clostridia</taxon>
        <taxon>Eubacteriales</taxon>
        <taxon>Oscillospiraceae</taxon>
        <taxon>Acetivibrio</taxon>
    </lineage>
</organism>
<feature type="signal peptide" evidence="1">
    <location>
        <begin position="1"/>
        <end position="32"/>
    </location>
</feature>
<feature type="chain" id="PRO_0000395870" description="Xyloglucanase Xgh74A" evidence="1">
    <location>
        <begin position="33"/>
        <end position="842"/>
    </location>
</feature>
<feature type="repeat" description="BNR 1" evidence="1">
    <location>
        <begin position="134"/>
        <end position="144"/>
    </location>
</feature>
<feature type="repeat" description="BNR 2" evidence="1">
    <location>
        <begin position="185"/>
        <end position="196"/>
    </location>
</feature>
<feature type="repeat" description="BNR 3" evidence="1">
    <location>
        <begin position="252"/>
        <end position="262"/>
    </location>
</feature>
<feature type="repeat" description="BNR 4" evidence="1">
    <location>
        <begin position="358"/>
        <end position="368"/>
    </location>
</feature>
<feature type="repeat" description="BNR 5" evidence="1">
    <location>
        <begin position="533"/>
        <end position="541"/>
    </location>
</feature>
<feature type="repeat" description="BNR 6" evidence="1">
    <location>
        <begin position="577"/>
        <end position="586"/>
    </location>
</feature>
<feature type="repeat" description="BNR 7" evidence="1">
    <location>
        <begin position="616"/>
        <end position="626"/>
    </location>
</feature>
<feature type="repeat" description="BNR 8" evidence="1">
    <location>
        <begin position="660"/>
        <end position="671"/>
    </location>
</feature>
<feature type="repeat" description="BNR 9" evidence="1">
    <location>
        <begin position="708"/>
        <end position="718"/>
    </location>
</feature>
<feature type="domain" description="Dockerin" evidence="2">
    <location>
        <begin position="771"/>
        <end position="841"/>
    </location>
</feature>
<feature type="active site" description="Nucleophile" evidence="4">
    <location>
        <position position="70"/>
    </location>
</feature>
<feature type="active site" description="Proton donor" evidence="4">
    <location>
        <position position="480"/>
    </location>
</feature>
<feature type="mutagenesis site" description="Loss of activity." evidence="4">
    <original>D</original>
    <variation>A</variation>
    <location>
        <position position="70"/>
    </location>
</feature>
<feature type="mutagenesis site" description="Loss of activity." evidence="4">
    <original>D</original>
    <variation>A</variation>
    <location>
        <position position="480"/>
    </location>
</feature>
<feature type="strand" evidence="9">
    <location>
        <begin position="38"/>
        <end position="43"/>
    </location>
</feature>
<feature type="strand" evidence="9">
    <location>
        <begin position="54"/>
        <end position="57"/>
    </location>
</feature>
<feature type="strand" evidence="9">
    <location>
        <begin position="59"/>
        <end position="61"/>
    </location>
</feature>
<feature type="strand" evidence="9">
    <location>
        <begin position="65"/>
        <end position="68"/>
    </location>
</feature>
<feature type="strand" evidence="9">
    <location>
        <begin position="70"/>
        <end position="72"/>
    </location>
</feature>
<feature type="strand" evidence="9">
    <location>
        <begin position="74"/>
        <end position="78"/>
    </location>
</feature>
<feature type="turn" evidence="9">
    <location>
        <begin position="79"/>
        <end position="82"/>
    </location>
</feature>
<feature type="strand" evidence="9">
    <location>
        <begin position="83"/>
        <end position="86"/>
    </location>
</feature>
<feature type="helix" evidence="9">
    <location>
        <begin position="93"/>
        <end position="99"/>
    </location>
</feature>
<feature type="strand" evidence="9">
    <location>
        <begin position="101"/>
        <end position="106"/>
    </location>
</feature>
<feature type="strand" evidence="9">
    <location>
        <begin position="108"/>
        <end position="110"/>
    </location>
</feature>
<feature type="strand" evidence="9">
    <location>
        <begin position="114"/>
        <end position="118"/>
    </location>
</feature>
<feature type="strand" evidence="9">
    <location>
        <begin position="122"/>
        <end position="126"/>
    </location>
</feature>
<feature type="strand" evidence="9">
    <location>
        <begin position="131"/>
        <end position="141"/>
    </location>
</feature>
<feature type="strand" evidence="9">
    <location>
        <begin position="143"/>
        <end position="146"/>
    </location>
</feature>
<feature type="turn" evidence="9">
    <location>
        <begin position="156"/>
        <end position="159"/>
    </location>
</feature>
<feature type="strand" evidence="9">
    <location>
        <begin position="164"/>
        <end position="166"/>
    </location>
</feature>
<feature type="strand" evidence="9">
    <location>
        <begin position="174"/>
        <end position="177"/>
    </location>
</feature>
<feature type="strand" evidence="9">
    <location>
        <begin position="184"/>
        <end position="189"/>
    </location>
</feature>
<feature type="turn" evidence="9">
    <location>
        <begin position="213"/>
        <end position="215"/>
    </location>
</feature>
<feature type="strand" evidence="9">
    <location>
        <begin position="221"/>
        <end position="226"/>
    </location>
</feature>
<feature type="helix" evidence="9">
    <location>
        <begin position="228"/>
        <end position="230"/>
    </location>
</feature>
<feature type="strand" evidence="9">
    <location>
        <begin position="240"/>
        <end position="245"/>
    </location>
</feature>
<feature type="strand" evidence="9">
    <location>
        <begin position="251"/>
        <end position="256"/>
    </location>
</feature>
<feature type="strand" evidence="9">
    <location>
        <begin position="270"/>
        <end position="278"/>
    </location>
</feature>
<feature type="strand" evidence="9">
    <location>
        <begin position="282"/>
        <end position="291"/>
    </location>
</feature>
<feature type="strand" evidence="9">
    <location>
        <begin position="301"/>
        <end position="307"/>
    </location>
</feature>
<feature type="turn" evidence="9">
    <location>
        <begin position="308"/>
        <end position="310"/>
    </location>
</feature>
<feature type="strand" evidence="9">
    <location>
        <begin position="313"/>
        <end position="315"/>
    </location>
</feature>
<feature type="strand" evidence="9">
    <location>
        <begin position="328"/>
        <end position="335"/>
    </location>
</feature>
<feature type="strand" evidence="9">
    <location>
        <begin position="343"/>
        <end position="348"/>
    </location>
</feature>
<feature type="strand" evidence="9">
    <location>
        <begin position="357"/>
        <end position="362"/>
    </location>
</feature>
<feature type="strand" evidence="9">
    <location>
        <begin position="368"/>
        <end position="373"/>
    </location>
</feature>
<feature type="strand" evidence="8">
    <location>
        <begin position="375"/>
        <end position="377"/>
    </location>
</feature>
<feature type="strand" evidence="9">
    <location>
        <begin position="379"/>
        <end position="386"/>
    </location>
</feature>
<feature type="helix" evidence="9">
    <location>
        <begin position="391"/>
        <end position="394"/>
    </location>
</feature>
<feature type="strand" evidence="9">
    <location>
        <begin position="415"/>
        <end position="417"/>
    </location>
</feature>
<feature type="strand" evidence="9">
    <location>
        <begin position="425"/>
        <end position="428"/>
    </location>
</feature>
<feature type="strand" evidence="9">
    <location>
        <begin position="433"/>
        <end position="437"/>
    </location>
</feature>
<feature type="helix" evidence="9">
    <location>
        <begin position="439"/>
        <end position="444"/>
    </location>
</feature>
<feature type="strand" evidence="9">
    <location>
        <begin position="448"/>
        <end position="452"/>
    </location>
</feature>
<feature type="strand" evidence="9">
    <location>
        <begin position="461"/>
        <end position="466"/>
    </location>
</feature>
<feature type="strand" evidence="9">
    <location>
        <begin position="469"/>
        <end position="471"/>
    </location>
</feature>
<feature type="strand" evidence="9">
    <location>
        <begin position="473"/>
        <end position="478"/>
    </location>
</feature>
<feature type="turn" evidence="9">
    <location>
        <begin position="479"/>
        <end position="481"/>
    </location>
</feature>
<feature type="strand" evidence="9">
    <location>
        <begin position="485"/>
        <end position="488"/>
    </location>
</feature>
<feature type="strand" evidence="9">
    <location>
        <begin position="502"/>
        <end position="510"/>
    </location>
</feature>
<feature type="strand" evidence="9">
    <location>
        <begin position="513"/>
        <end position="522"/>
    </location>
</feature>
<feature type="strand" evidence="9">
    <location>
        <begin position="530"/>
        <end position="536"/>
    </location>
</feature>
<feature type="strand" evidence="9">
    <location>
        <begin position="555"/>
        <end position="559"/>
    </location>
</feature>
<feature type="strand" evidence="9">
    <location>
        <begin position="566"/>
        <end position="569"/>
    </location>
</feature>
<feature type="strand" evidence="9">
    <location>
        <begin position="576"/>
        <end position="580"/>
    </location>
</feature>
<feature type="strand" evidence="9">
    <location>
        <begin position="596"/>
        <end position="599"/>
    </location>
</feature>
<feature type="strand" evidence="9">
    <location>
        <begin position="607"/>
        <end position="611"/>
    </location>
</feature>
<feature type="strand" evidence="9">
    <location>
        <begin position="614"/>
        <end position="620"/>
    </location>
</feature>
<feature type="strand" evidence="9">
    <location>
        <begin position="638"/>
        <end position="643"/>
    </location>
</feature>
<feature type="strand" evidence="9">
    <location>
        <begin position="646"/>
        <end position="653"/>
    </location>
</feature>
<feature type="strand" evidence="9">
    <location>
        <begin position="659"/>
        <end position="664"/>
    </location>
</feature>
<feature type="strand" evidence="9">
    <location>
        <begin position="676"/>
        <end position="684"/>
    </location>
</feature>
<feature type="strand" evidence="9">
    <location>
        <begin position="694"/>
        <end position="701"/>
    </location>
</feature>
<feature type="strand" evidence="9">
    <location>
        <begin position="704"/>
        <end position="712"/>
    </location>
</feature>
<feature type="strand" evidence="9">
    <location>
        <begin position="734"/>
        <end position="737"/>
    </location>
</feature>
<feature type="strand" evidence="9">
    <location>
        <begin position="740"/>
        <end position="747"/>
    </location>
</feature>
<feature type="strand" evidence="9">
    <location>
        <begin position="749"/>
        <end position="751"/>
    </location>
</feature>
<feature type="strand" evidence="9">
    <location>
        <begin position="753"/>
        <end position="758"/>
    </location>
</feature>
<sequence length="842" mass="92393">MVKKFTSKIKAAVFAAVVAATAIFGPAISSQAVTSVPYKWDNVVIGGGGGFMPGIVFNETEKDLIYARADIGGAYRWDPSTETWIPLLDHFQMDEYSYYGVESIATDPVDPNRVYIVAGMYTNDWLPNMGAILRSTDRGETWEKTILPFKMGGNMPGRSMGERLAIDPNDNRILYLGTRCGNGLWRSTDYGVTWSKVESFPNPGTYIYDPNFDYTKDIIGVVWVVFDKSSSTPGNPTKTIYVGVADKNESIYRSTDGGVTWKAVPGQPKGLLPHHGVLASNGMLYITYGDTCGPYDGNGKGQVWKFNTRTGEWIDITPIPYSSSDNRFCFAGLAVDRQNPDIIMVTSMNAWWPDEYIFRSTDGGATWKNIWEWGMYPERILHYEIDISAAPWLDWGTEKQLPEINPKLGWMIGDIEIDPFNSDRMMYVTGATIYGCDNLTDWDRGGKVKIEVKATGIEECAVLDLVSPPEGAPLVSAVGDLVGFVHDDLKVGPKKMHVPSYSSGTGIDYAELVPNFMALVAKADLYDVKKISFSYDGGRNWFQPPNEAPNSVGGGSVAVAADAKSVIWTPENASPAVTTDNGNSWKVCTNLGMGAVVASDRVNGKKFYAFYNGKFYISTDGGLTFTDTKAPQLPKSVNKIKAVPGKEGHVWLAAREGGLWRSTDGGYTFEKLSNVDTAHVVGFGKAAPGQDYMAIYITGKIDNVLGFFRSDDAGKTWVRINDDEHGYGAVDTAITGDPRVYGRVYIATNGRGIVYGEPASDEPVPTPPQVDKGLVGDLNGDNRINSTDLTLMKRYILKSIEDLPVEDDLWAADINGDGKINSTDYTYLKKYLLQAIPELPKK</sequence>
<keyword id="KW-0002">3D-structure</keyword>
<keyword id="KW-0119">Carbohydrate metabolism</keyword>
<keyword id="KW-0136">Cellulose degradation</keyword>
<keyword id="KW-0326">Glycosidase</keyword>
<keyword id="KW-0378">Hydrolase</keyword>
<keyword id="KW-0624">Polysaccharide degradation</keyword>
<keyword id="KW-0677">Repeat</keyword>
<keyword id="KW-0732">Signal</keyword>
<gene>
    <name evidence="7" type="primary">xghA</name>
</gene>
<evidence type="ECO:0000255" key="1"/>
<evidence type="ECO:0000255" key="2">
    <source>
        <dbReference type="PROSITE-ProRule" id="PRU01102"/>
    </source>
</evidence>
<evidence type="ECO:0000269" key="3">
    <source>
    </source>
</evidence>
<evidence type="ECO:0000269" key="4">
    <source>
    </source>
</evidence>
<evidence type="ECO:0000303" key="5">
    <source>
    </source>
</evidence>
<evidence type="ECO:0000305" key="6"/>
<evidence type="ECO:0000312" key="7">
    <source>
        <dbReference type="EMBL" id="CAE51306.1"/>
    </source>
</evidence>
<evidence type="ECO:0007829" key="8">
    <source>
        <dbReference type="PDB" id="2CN2"/>
    </source>
</evidence>
<evidence type="ECO:0007829" key="9">
    <source>
        <dbReference type="PDB" id="2CN3"/>
    </source>
</evidence>
<dbReference type="EC" id="3.2.1.-"/>
<dbReference type="EMBL" id="AJ585344">
    <property type="protein sequence ID" value="CAE51306.1"/>
    <property type="molecule type" value="Genomic_DNA"/>
</dbReference>
<dbReference type="PDB" id="2CN2">
    <property type="method" value="X-ray"/>
    <property type="resolution" value="2.10 A"/>
    <property type="chains" value="A/B/C/D=28-764"/>
</dbReference>
<dbReference type="PDB" id="2CN3">
    <property type="method" value="X-ray"/>
    <property type="resolution" value="1.95 A"/>
    <property type="chains" value="A/B=28-764"/>
</dbReference>
<dbReference type="PDBsum" id="2CN2"/>
<dbReference type="PDBsum" id="2CN3"/>
<dbReference type="SMR" id="Q70DK5"/>
<dbReference type="IntAct" id="Q70DK5">
    <property type="interactions" value="1"/>
</dbReference>
<dbReference type="CAZy" id="GH74">
    <property type="family name" value="Glycoside Hydrolase Family 74"/>
</dbReference>
<dbReference type="BRENDA" id="3.2.1.155">
    <property type="organism ID" value="1530"/>
</dbReference>
<dbReference type="EvolutionaryTrace" id="Q70DK5"/>
<dbReference type="GO" id="GO:0043263">
    <property type="term" value="C:cellulosome"/>
    <property type="evidence" value="ECO:0000314"/>
    <property type="project" value="MENGO"/>
</dbReference>
<dbReference type="GO" id="GO:0033946">
    <property type="term" value="F:xyloglucan-specific endo-beta-1,4-glucanase activity"/>
    <property type="evidence" value="ECO:0000314"/>
    <property type="project" value="MENGO"/>
</dbReference>
<dbReference type="GO" id="GO:0030245">
    <property type="term" value="P:cellulose catabolic process"/>
    <property type="evidence" value="ECO:0007669"/>
    <property type="project" value="UniProtKB-KW"/>
</dbReference>
<dbReference type="GO" id="GO:2000899">
    <property type="term" value="P:xyloglucan catabolic process"/>
    <property type="evidence" value="ECO:0000314"/>
    <property type="project" value="MENGO"/>
</dbReference>
<dbReference type="CDD" id="cd14256">
    <property type="entry name" value="Dockerin_I"/>
    <property type="match status" value="1"/>
</dbReference>
<dbReference type="CDD" id="cd15482">
    <property type="entry name" value="Sialidase_non-viral"/>
    <property type="match status" value="2"/>
</dbReference>
<dbReference type="FunFam" id="1.10.1330.10:FF:000001">
    <property type="entry name" value="Endoglucanase D"/>
    <property type="match status" value="1"/>
</dbReference>
<dbReference type="FunFam" id="2.130.10.10:FF:000534">
    <property type="entry name" value="Xyloglucanase Xgh74A"/>
    <property type="match status" value="1"/>
</dbReference>
<dbReference type="Gene3D" id="1.10.1330.10">
    <property type="entry name" value="Dockerin domain"/>
    <property type="match status" value="1"/>
</dbReference>
<dbReference type="Gene3D" id="2.130.10.10">
    <property type="entry name" value="YVTN repeat-like/Quinoprotein amine dehydrogenase"/>
    <property type="match status" value="2"/>
</dbReference>
<dbReference type="InterPro" id="IPR002105">
    <property type="entry name" value="Dockerin_1_rpt"/>
</dbReference>
<dbReference type="InterPro" id="IPR016134">
    <property type="entry name" value="Dockerin_dom"/>
</dbReference>
<dbReference type="InterPro" id="IPR036439">
    <property type="entry name" value="Dockerin_dom_sf"/>
</dbReference>
<dbReference type="InterPro" id="IPR018247">
    <property type="entry name" value="EF_Hand_1_Ca_BS"/>
</dbReference>
<dbReference type="InterPro" id="IPR015943">
    <property type="entry name" value="WD40/YVTN_repeat-like_dom_sf"/>
</dbReference>
<dbReference type="InterPro" id="IPR052025">
    <property type="entry name" value="Xyloglucanase_GH74"/>
</dbReference>
<dbReference type="PANTHER" id="PTHR43739:SF2">
    <property type="entry name" value="OLIGOXYLOGLUCAN-REDUCING END-SPECIFIC XYLOGLUCANASE-RELATED"/>
    <property type="match status" value="1"/>
</dbReference>
<dbReference type="PANTHER" id="PTHR43739">
    <property type="entry name" value="XYLOGLUCANASE (EUROFUNG)"/>
    <property type="match status" value="1"/>
</dbReference>
<dbReference type="Pfam" id="PF00404">
    <property type="entry name" value="Dockerin_1"/>
    <property type="match status" value="1"/>
</dbReference>
<dbReference type="SUPFAM" id="SSF110296">
    <property type="entry name" value="Oligoxyloglucan reducing end-specific cellobiohydrolase"/>
    <property type="match status" value="2"/>
</dbReference>
<dbReference type="SUPFAM" id="SSF63446">
    <property type="entry name" value="Type I dockerin domain"/>
    <property type="match status" value="1"/>
</dbReference>
<dbReference type="PROSITE" id="PS00448">
    <property type="entry name" value="CLOS_CELLULOSOME_RPT"/>
    <property type="match status" value="2"/>
</dbReference>
<dbReference type="PROSITE" id="PS51766">
    <property type="entry name" value="DOCKERIN"/>
    <property type="match status" value="1"/>
</dbReference>
<protein>
    <recommendedName>
        <fullName evidence="5">Xyloglucanase Xgh74A</fullName>
        <ecNumber>3.2.1.-</ecNumber>
    </recommendedName>
</protein>
<reference evidence="6 7" key="1">
    <citation type="journal article" date="2005" name="Microbiology">
        <title>Two new major subunits in the cellulosome of Clostridium thermocellum: xyloglucanase Xgh74A and endoxylanase Xyn10D.</title>
        <authorList>
            <person name="Zverlov V.V."/>
            <person name="Schantz N."/>
            <person name="Schmitt-Kopplin P."/>
            <person name="Schwarz W.H."/>
        </authorList>
    </citation>
    <scope>NUCLEOTIDE SEQUENCE [GENOMIC DNA]</scope>
    <scope>FUNCTION</scope>
    <scope>BIOPHYSICOCHEMICAL PROPERTIES</scope>
    <source>
        <strain evidence="7">F7</strain>
    </source>
</reference>
<reference evidence="6" key="2">
    <citation type="journal article" date="2006" name="J. Biol. Chem.">
        <title>Crystal structures of Clostridium thermocellum xyloglucanase, XGH74A, reveal the structural basis for xyloglucan recognition and degradation.</title>
        <authorList>
            <person name="Martinez-Fleites C."/>
            <person name="Guerreiro C.I."/>
            <person name="Baumann M.J."/>
            <person name="Taylor E.J."/>
            <person name="Prates J.A."/>
            <person name="Ferreira L.M."/>
            <person name="Fontes C.M."/>
            <person name="Brumer H."/>
            <person name="Davies G.J."/>
        </authorList>
    </citation>
    <scope>X-RAY CRYSTALLOGRAPHY (1.95 ANGSTROMS) OF 28-764</scope>
    <scope>FUNCTION</scope>
    <scope>ACTIVE SITES</scope>
    <scope>MUTAGENESIS OF ASP-70 AND ASP-480</scope>
</reference>
<accession>Q70DK5</accession>
<proteinExistence type="evidence at protein level"/>
<comment type="function">
    <text evidence="3 4">Hydrolyzes the glucosidic bonds of unbranched Glc residues in tamarind seed xyloglucan, producing XXXG, XLXG, XXLG and XLLG. Has low activity on carboxymethylcellulose, lichenan,hydroxyethylcellulose and glucuronoxylan, and no activity on xylan, polygalaturonic acid, wheat arabinoxylan, rhamnogalacturan, curdlan, laminarin, galactomannan, galactan, arabinan and pachyman or amorphous cellulose.</text>
</comment>
<comment type="biophysicochemical properties">
    <phDependence>
        <text evidence="3">Optimum pH is 6.4 with tamarind seed xyloglucan as substrate. Retains 50% of its activity between pH 5.7 and 7.8.</text>
    </phDependence>
    <temperatureDependence>
        <text evidence="3">Optimum temperature is 75 degrees Celsius. Retains 25% of its activity after incubation at 90 degrees Celsius for 30 minutes.</text>
    </temperatureDependence>
</comment>
<comment type="similarity">
    <text evidence="3">Belongs to the glycosyl hydrolase 74 family.</text>
</comment>
<name>XG74_ACETH</name>